<proteinExistence type="inferred from homology"/>
<protein>
    <recommendedName>
        <fullName evidence="1">Ribosomal protein L11 methyltransferase</fullName>
        <shortName evidence="1">L11 Mtase</shortName>
        <ecNumber evidence="1">2.1.1.-</ecNumber>
    </recommendedName>
</protein>
<sequence length="292" mass="32187">MSEIRLYVTTTEIKAGEILDLMSDYFGEEDVAIATTEVDEKRDIWEASVYLMAEQEEEFRERVSTLLAPAFPGLVIEKEIIPDVDWIAKSLEGLKPVRAGRFIVHGAHDRDKVQPHDLAIEIEAGQAFGTGHHGTTAGCLEMIEDVLRARKVRNALDLGTGSGVLAIAVRKMRPIPVLATDIDPIAVKVAKENVRLNGIVSGMALETAPGFHSDAFRKHGPFDLIIANILARPLIKMAPQLVTHLAPGGTVILSGILASQRWKVLSAYNGAKLSHIRTIWRNDWVTLHLRKD</sequence>
<gene>
    <name evidence="1" type="primary">prmA</name>
    <name type="ordered locus">Atu2072</name>
    <name type="ORF">AGR_C_3754</name>
</gene>
<comment type="function">
    <text evidence="1">Methylates ribosomal protein L11.</text>
</comment>
<comment type="catalytic activity">
    <reaction evidence="1">
        <text>L-lysyl-[protein] + 3 S-adenosyl-L-methionine = N(6),N(6),N(6)-trimethyl-L-lysyl-[protein] + 3 S-adenosyl-L-homocysteine + 3 H(+)</text>
        <dbReference type="Rhea" id="RHEA:54192"/>
        <dbReference type="Rhea" id="RHEA-COMP:9752"/>
        <dbReference type="Rhea" id="RHEA-COMP:13826"/>
        <dbReference type="ChEBI" id="CHEBI:15378"/>
        <dbReference type="ChEBI" id="CHEBI:29969"/>
        <dbReference type="ChEBI" id="CHEBI:57856"/>
        <dbReference type="ChEBI" id="CHEBI:59789"/>
        <dbReference type="ChEBI" id="CHEBI:61961"/>
    </reaction>
</comment>
<comment type="subcellular location">
    <subcellularLocation>
        <location evidence="1">Cytoplasm</location>
    </subcellularLocation>
</comment>
<comment type="similarity">
    <text evidence="1">Belongs to the methyltransferase superfamily. PrmA family.</text>
</comment>
<name>PRMA_AGRFC</name>
<reference key="1">
    <citation type="journal article" date="2001" name="Science">
        <title>The genome of the natural genetic engineer Agrobacterium tumefaciens C58.</title>
        <authorList>
            <person name="Wood D.W."/>
            <person name="Setubal J.C."/>
            <person name="Kaul R."/>
            <person name="Monks D.E."/>
            <person name="Kitajima J.P."/>
            <person name="Okura V.K."/>
            <person name="Zhou Y."/>
            <person name="Chen L."/>
            <person name="Wood G.E."/>
            <person name="Almeida N.F. Jr."/>
            <person name="Woo L."/>
            <person name="Chen Y."/>
            <person name="Paulsen I.T."/>
            <person name="Eisen J.A."/>
            <person name="Karp P.D."/>
            <person name="Bovee D. Sr."/>
            <person name="Chapman P."/>
            <person name="Clendenning J."/>
            <person name="Deatherage G."/>
            <person name="Gillet W."/>
            <person name="Grant C."/>
            <person name="Kutyavin T."/>
            <person name="Levy R."/>
            <person name="Li M.-J."/>
            <person name="McClelland E."/>
            <person name="Palmieri A."/>
            <person name="Raymond C."/>
            <person name="Rouse G."/>
            <person name="Saenphimmachak C."/>
            <person name="Wu Z."/>
            <person name="Romero P."/>
            <person name="Gordon D."/>
            <person name="Zhang S."/>
            <person name="Yoo H."/>
            <person name="Tao Y."/>
            <person name="Biddle P."/>
            <person name="Jung M."/>
            <person name="Krespan W."/>
            <person name="Perry M."/>
            <person name="Gordon-Kamm B."/>
            <person name="Liao L."/>
            <person name="Kim S."/>
            <person name="Hendrick C."/>
            <person name="Zhao Z.-Y."/>
            <person name="Dolan M."/>
            <person name="Chumley F."/>
            <person name="Tingey S.V."/>
            <person name="Tomb J.-F."/>
            <person name="Gordon M.P."/>
            <person name="Olson M.V."/>
            <person name="Nester E.W."/>
        </authorList>
    </citation>
    <scope>NUCLEOTIDE SEQUENCE [LARGE SCALE GENOMIC DNA]</scope>
    <source>
        <strain>C58 / ATCC 33970</strain>
    </source>
</reference>
<reference key="2">
    <citation type="journal article" date="2001" name="Science">
        <title>Genome sequence of the plant pathogen and biotechnology agent Agrobacterium tumefaciens C58.</title>
        <authorList>
            <person name="Goodner B."/>
            <person name="Hinkle G."/>
            <person name="Gattung S."/>
            <person name="Miller N."/>
            <person name="Blanchard M."/>
            <person name="Qurollo B."/>
            <person name="Goldman B.S."/>
            <person name="Cao Y."/>
            <person name="Askenazi M."/>
            <person name="Halling C."/>
            <person name="Mullin L."/>
            <person name="Houmiel K."/>
            <person name="Gordon J."/>
            <person name="Vaudin M."/>
            <person name="Iartchouk O."/>
            <person name="Epp A."/>
            <person name="Liu F."/>
            <person name="Wollam C."/>
            <person name="Allinger M."/>
            <person name="Doughty D."/>
            <person name="Scott C."/>
            <person name="Lappas C."/>
            <person name="Markelz B."/>
            <person name="Flanagan C."/>
            <person name="Crowell C."/>
            <person name="Gurson J."/>
            <person name="Lomo C."/>
            <person name="Sear C."/>
            <person name="Strub G."/>
            <person name="Cielo C."/>
            <person name="Slater S."/>
        </authorList>
    </citation>
    <scope>NUCLEOTIDE SEQUENCE [LARGE SCALE GENOMIC DNA]</scope>
    <source>
        <strain>C58 / ATCC 33970</strain>
    </source>
</reference>
<dbReference type="EC" id="2.1.1.-" evidence="1"/>
<dbReference type="EMBL" id="AE007869">
    <property type="protein sequence ID" value="AAK87822.1"/>
    <property type="molecule type" value="Genomic_DNA"/>
</dbReference>
<dbReference type="PIR" id="AI2830">
    <property type="entry name" value="AI2830"/>
</dbReference>
<dbReference type="PIR" id="E97608">
    <property type="entry name" value="E97608"/>
</dbReference>
<dbReference type="RefSeq" id="NP_355037.1">
    <property type="nucleotide sequence ID" value="NC_003062.2"/>
</dbReference>
<dbReference type="RefSeq" id="WP_010972037.1">
    <property type="nucleotide sequence ID" value="NC_003062.2"/>
</dbReference>
<dbReference type="SMR" id="Q8UDP9"/>
<dbReference type="STRING" id="176299.Atu2072"/>
<dbReference type="DNASU" id="1134110"/>
<dbReference type="EnsemblBacteria" id="AAK87822">
    <property type="protein sequence ID" value="AAK87822"/>
    <property type="gene ID" value="Atu2072"/>
</dbReference>
<dbReference type="GeneID" id="1134110"/>
<dbReference type="KEGG" id="atu:Atu2072"/>
<dbReference type="PATRIC" id="fig|176299.10.peg.2085"/>
<dbReference type="eggNOG" id="COG2264">
    <property type="taxonomic scope" value="Bacteria"/>
</dbReference>
<dbReference type="HOGENOM" id="CLU_049382_3_0_5"/>
<dbReference type="OrthoDB" id="9785995at2"/>
<dbReference type="PhylomeDB" id="Q8UDP9"/>
<dbReference type="Proteomes" id="UP000000813">
    <property type="component" value="Chromosome circular"/>
</dbReference>
<dbReference type="GO" id="GO:0005737">
    <property type="term" value="C:cytoplasm"/>
    <property type="evidence" value="ECO:0007669"/>
    <property type="project" value="UniProtKB-SubCell"/>
</dbReference>
<dbReference type="GO" id="GO:0016279">
    <property type="term" value="F:protein-lysine N-methyltransferase activity"/>
    <property type="evidence" value="ECO:0007669"/>
    <property type="project" value="RHEA"/>
</dbReference>
<dbReference type="GO" id="GO:0032259">
    <property type="term" value="P:methylation"/>
    <property type="evidence" value="ECO:0007669"/>
    <property type="project" value="UniProtKB-KW"/>
</dbReference>
<dbReference type="CDD" id="cd02440">
    <property type="entry name" value="AdoMet_MTases"/>
    <property type="match status" value="1"/>
</dbReference>
<dbReference type="Gene3D" id="3.40.50.150">
    <property type="entry name" value="Vaccinia Virus protein VP39"/>
    <property type="match status" value="1"/>
</dbReference>
<dbReference type="HAMAP" id="MF_00735">
    <property type="entry name" value="Methyltr_PrmA"/>
    <property type="match status" value="1"/>
</dbReference>
<dbReference type="InterPro" id="IPR050078">
    <property type="entry name" value="Ribosomal_L11_MeTrfase_PrmA"/>
</dbReference>
<dbReference type="InterPro" id="IPR004498">
    <property type="entry name" value="Ribosomal_PrmA_MeTrfase"/>
</dbReference>
<dbReference type="InterPro" id="IPR029063">
    <property type="entry name" value="SAM-dependent_MTases_sf"/>
</dbReference>
<dbReference type="NCBIfam" id="NF001784">
    <property type="entry name" value="PRK00517.2-1"/>
    <property type="match status" value="1"/>
</dbReference>
<dbReference type="PANTHER" id="PTHR43648">
    <property type="entry name" value="ELECTRON TRANSFER FLAVOPROTEIN BETA SUBUNIT LYSINE METHYLTRANSFERASE"/>
    <property type="match status" value="1"/>
</dbReference>
<dbReference type="PANTHER" id="PTHR43648:SF1">
    <property type="entry name" value="ELECTRON TRANSFER FLAVOPROTEIN BETA SUBUNIT LYSINE METHYLTRANSFERASE"/>
    <property type="match status" value="1"/>
</dbReference>
<dbReference type="Pfam" id="PF06325">
    <property type="entry name" value="PrmA"/>
    <property type="match status" value="1"/>
</dbReference>
<dbReference type="SUPFAM" id="SSF53335">
    <property type="entry name" value="S-adenosyl-L-methionine-dependent methyltransferases"/>
    <property type="match status" value="1"/>
</dbReference>
<feature type="chain" id="PRO_0000192228" description="Ribosomal protein L11 methyltransferase">
    <location>
        <begin position="1"/>
        <end position="292"/>
    </location>
</feature>
<feature type="binding site" evidence="1">
    <location>
        <position position="136"/>
    </location>
    <ligand>
        <name>S-adenosyl-L-methionine</name>
        <dbReference type="ChEBI" id="CHEBI:59789"/>
    </ligand>
</feature>
<feature type="binding site" evidence="1">
    <location>
        <position position="159"/>
    </location>
    <ligand>
        <name>S-adenosyl-L-methionine</name>
        <dbReference type="ChEBI" id="CHEBI:59789"/>
    </ligand>
</feature>
<feature type="binding site" evidence="1">
    <location>
        <position position="181"/>
    </location>
    <ligand>
        <name>S-adenosyl-L-methionine</name>
        <dbReference type="ChEBI" id="CHEBI:59789"/>
    </ligand>
</feature>
<feature type="binding site" evidence="1">
    <location>
        <position position="228"/>
    </location>
    <ligand>
        <name>S-adenosyl-L-methionine</name>
        <dbReference type="ChEBI" id="CHEBI:59789"/>
    </ligand>
</feature>
<evidence type="ECO:0000255" key="1">
    <source>
        <dbReference type="HAMAP-Rule" id="MF_00735"/>
    </source>
</evidence>
<keyword id="KW-0963">Cytoplasm</keyword>
<keyword id="KW-0489">Methyltransferase</keyword>
<keyword id="KW-1185">Reference proteome</keyword>
<keyword id="KW-0949">S-adenosyl-L-methionine</keyword>
<keyword id="KW-0808">Transferase</keyword>
<organism>
    <name type="scientific">Agrobacterium fabrum (strain C58 / ATCC 33970)</name>
    <name type="common">Agrobacterium tumefaciens (strain C58)</name>
    <dbReference type="NCBI Taxonomy" id="176299"/>
    <lineage>
        <taxon>Bacteria</taxon>
        <taxon>Pseudomonadati</taxon>
        <taxon>Pseudomonadota</taxon>
        <taxon>Alphaproteobacteria</taxon>
        <taxon>Hyphomicrobiales</taxon>
        <taxon>Rhizobiaceae</taxon>
        <taxon>Rhizobium/Agrobacterium group</taxon>
        <taxon>Agrobacterium</taxon>
        <taxon>Agrobacterium tumefaciens complex</taxon>
    </lineage>
</organism>
<accession>Q8UDP9</accession>